<protein>
    <recommendedName>
        <fullName evidence="2">5-hydroxymethyl-dUMP N-hydrolase</fullName>
        <ecNumber evidence="2">3.2.2.-</ecNumber>
    </recommendedName>
    <alternativeName>
        <fullName evidence="2">2'-deoxynucleoside 5'-phosphate N-hydrolase 1</fullName>
    </alternativeName>
</protein>
<name>DNPH1_ESOLU</name>
<comment type="function">
    <text evidence="2">Part of a nucleotide salvage pathway that eliminates epigenetically modified 5-hydroxymethyl-dCMP (hmdCMP) in a two-step process entailing deamination to cytotoxic 5-hydroxymethyl-dUMP (hmdUMP), followed by its hydrolysis into 5-hydroxymethyluracil (hmU) and 2-deoxy-D-ribose 5-phosphate (deoxyribosephosphate). Catalyzes the second step in that pathway, the hydrolysis of the N-glycosidic bond in hmdUMP, degrading this cytotoxic nucleotide to avoid its genomic integration.</text>
</comment>
<comment type="catalytic activity">
    <reaction evidence="2">
        <text>5-hydroxymethyl-dUMP + H2O = 5-hydroxymethyluracil + 2-deoxy-D-ribose 5-phosphate</text>
        <dbReference type="Rhea" id="RHEA:77099"/>
        <dbReference type="ChEBI" id="CHEBI:15377"/>
        <dbReference type="ChEBI" id="CHEBI:16964"/>
        <dbReference type="ChEBI" id="CHEBI:62877"/>
        <dbReference type="ChEBI" id="CHEBI:90409"/>
    </reaction>
    <physiologicalReaction direction="left-to-right" evidence="2">
        <dbReference type="Rhea" id="RHEA:77100"/>
    </physiologicalReaction>
</comment>
<comment type="subunit">
    <text evidence="2">Monomer and homodimer.</text>
</comment>
<comment type="subcellular location">
    <subcellularLocation>
        <location evidence="2">Cytoplasm</location>
    </subcellularLocation>
    <subcellularLocation>
        <location evidence="2">Nucleus</location>
    </subcellularLocation>
</comment>
<comment type="similarity">
    <text evidence="3">Belongs to the 2'-deoxynucleoside 5'-phosphate N-hydrolase 1 family.</text>
</comment>
<sequence length="145" mass="16378">MHIYFCGSIRGGRQDVIIYQRIVQTLQKYGEVLTEHVSHSDLSERGEDAVQDGDKFIHDRDMEWLVMSDVIIAEVTQPSLGVGYELGSARGMRKKILCLFRPSSGKSLSAMVRGAVDGSLFQVRDYKEEEVEGILEEYFKGLSKD</sequence>
<keyword id="KW-0963">Cytoplasm</keyword>
<keyword id="KW-0326">Glycosidase</keyword>
<keyword id="KW-0378">Hydrolase</keyword>
<keyword id="KW-0546">Nucleotide metabolism</keyword>
<keyword id="KW-0539">Nucleus</keyword>
<keyword id="KW-0597">Phosphoprotein</keyword>
<keyword id="KW-1185">Reference proteome</keyword>
<dbReference type="EC" id="3.2.2.-" evidence="2"/>
<dbReference type="EMBL" id="BT078835">
    <property type="protein sequence ID" value="ACO13259.1"/>
    <property type="molecule type" value="mRNA"/>
</dbReference>
<dbReference type="RefSeq" id="NP_001291112.1">
    <property type="nucleotide sequence ID" value="NM_001304183.1"/>
</dbReference>
<dbReference type="SMR" id="C1BW56"/>
<dbReference type="FunCoup" id="C1BW56">
    <property type="interactions" value="822"/>
</dbReference>
<dbReference type="STRING" id="8010.ENSELUP00000017175"/>
<dbReference type="GeneID" id="105025506"/>
<dbReference type="KEGG" id="els:105025506"/>
<dbReference type="CTD" id="10591"/>
<dbReference type="InParanoid" id="C1BW56"/>
<dbReference type="OMA" id="EVLSWHV"/>
<dbReference type="OrthoDB" id="18087at2759"/>
<dbReference type="Proteomes" id="UP000265140">
    <property type="component" value="Chromosome 6"/>
</dbReference>
<dbReference type="Bgee" id="ENSELUG00000016938">
    <property type="expression patterns" value="Expressed in embryo and 11 other cell types or tissues"/>
</dbReference>
<dbReference type="GO" id="GO:0005737">
    <property type="term" value="C:cytoplasm"/>
    <property type="evidence" value="ECO:0000250"/>
    <property type="project" value="UniProtKB"/>
</dbReference>
<dbReference type="GO" id="GO:0005634">
    <property type="term" value="C:nucleus"/>
    <property type="evidence" value="ECO:0007669"/>
    <property type="project" value="UniProtKB-SubCell"/>
</dbReference>
<dbReference type="GO" id="GO:0070694">
    <property type="term" value="F:5-hydroxymethyl-dUMP N-hydrolase activity"/>
    <property type="evidence" value="ECO:0000250"/>
    <property type="project" value="UniProtKB"/>
</dbReference>
<dbReference type="GO" id="GO:0009159">
    <property type="term" value="P:deoxyribonucleoside monophosphate catabolic process"/>
    <property type="evidence" value="ECO:0007669"/>
    <property type="project" value="InterPro"/>
</dbReference>
<dbReference type="GO" id="GO:0043174">
    <property type="term" value="P:nucleoside salvage"/>
    <property type="evidence" value="ECO:0000250"/>
    <property type="project" value="UniProtKB"/>
</dbReference>
<dbReference type="GO" id="GO:0009117">
    <property type="term" value="P:nucleotide metabolic process"/>
    <property type="evidence" value="ECO:0007669"/>
    <property type="project" value="UniProtKB-KW"/>
</dbReference>
<dbReference type="FunFam" id="3.40.50.450:FF:000019">
    <property type="entry name" value="2'-deoxynucleoside 5'-phosphate N-hydrolase 1"/>
    <property type="match status" value="1"/>
</dbReference>
<dbReference type="Gene3D" id="3.40.50.450">
    <property type="match status" value="1"/>
</dbReference>
<dbReference type="HAMAP" id="MF_03036">
    <property type="entry name" value="Nuc_phosphate_hydrolase"/>
    <property type="match status" value="1"/>
</dbReference>
<dbReference type="InterPro" id="IPR051239">
    <property type="entry name" value="2'-dNMP_N-hydrolase"/>
</dbReference>
<dbReference type="InterPro" id="IPR028607">
    <property type="entry name" value="DNPH1"/>
</dbReference>
<dbReference type="InterPro" id="IPR007710">
    <property type="entry name" value="Nucleoside_deoxyribTrfase"/>
</dbReference>
<dbReference type="PANTHER" id="PTHR15364">
    <property type="entry name" value="2'-DEOXYNUCLEOSIDE 5'-PHOSPHATE N-HYDROLASE 1"/>
    <property type="match status" value="1"/>
</dbReference>
<dbReference type="PANTHER" id="PTHR15364:SF0">
    <property type="entry name" value="2'-DEOXYNUCLEOSIDE 5'-PHOSPHATE N-HYDROLASE 1"/>
    <property type="match status" value="1"/>
</dbReference>
<dbReference type="Pfam" id="PF05014">
    <property type="entry name" value="Nuc_deoxyrib_tr"/>
    <property type="match status" value="1"/>
</dbReference>
<dbReference type="SUPFAM" id="SSF52309">
    <property type="entry name" value="N-(deoxy)ribosyltransferase-like"/>
    <property type="match status" value="1"/>
</dbReference>
<organism>
    <name type="scientific">Esox lucius</name>
    <name type="common">Northern pike</name>
    <dbReference type="NCBI Taxonomy" id="8010"/>
    <lineage>
        <taxon>Eukaryota</taxon>
        <taxon>Metazoa</taxon>
        <taxon>Chordata</taxon>
        <taxon>Craniata</taxon>
        <taxon>Vertebrata</taxon>
        <taxon>Euteleostomi</taxon>
        <taxon>Actinopterygii</taxon>
        <taxon>Neopterygii</taxon>
        <taxon>Teleostei</taxon>
        <taxon>Protacanthopterygii</taxon>
        <taxon>Esociformes</taxon>
        <taxon>Esocidae</taxon>
        <taxon>Esox</taxon>
    </lineage>
</organism>
<gene>
    <name evidence="2" type="primary">dnph1</name>
</gene>
<reference key="1">
    <citation type="journal article" date="2010" name="BMC Genomics">
        <title>Salmo salar and Esox lucius full-length cDNA sequences reveal changes in evolutionary pressures on a post-tetraploidization genome.</title>
        <authorList>
            <person name="Leong J.S."/>
            <person name="Jantzen S.G."/>
            <person name="von Schalburg K.R."/>
            <person name="Cooper G.A."/>
            <person name="Messmer A.M."/>
            <person name="Liao N.Y."/>
            <person name="Munro S."/>
            <person name="Moore R."/>
            <person name="Holt R.A."/>
            <person name="Jones S.J."/>
            <person name="Davidson W.S."/>
            <person name="Koop B.F."/>
        </authorList>
    </citation>
    <scope>NUCLEOTIDE SEQUENCE [LARGE SCALE MRNA]</scope>
    <source>
        <tissue>Kidney</tissue>
    </source>
</reference>
<evidence type="ECO:0000250" key="1">
    <source>
        <dbReference type="UniProtKB" id="O35820"/>
    </source>
</evidence>
<evidence type="ECO:0000250" key="2">
    <source>
        <dbReference type="UniProtKB" id="O43598"/>
    </source>
</evidence>
<evidence type="ECO:0000255" key="3">
    <source>
        <dbReference type="HAMAP-Rule" id="MF_03036"/>
    </source>
</evidence>
<feature type="chain" id="PRO_0000379458" description="5-hydroxymethyl-dUMP N-hydrolase">
    <location>
        <begin position="1"/>
        <end position="145"/>
    </location>
</feature>
<feature type="binding site" evidence="1">
    <location>
        <position position="7"/>
    </location>
    <ligand>
        <name>5-hydroxymethyl-dUMP</name>
        <dbReference type="ChEBI" id="CHEBI:90409"/>
        <note>ligand shared between homodimeric partners</note>
    </ligand>
</feature>
<feature type="binding site" evidence="1">
    <location>
        <position position="9"/>
    </location>
    <ligand>
        <name>5-hydroxymethyl-dUMP</name>
        <dbReference type="ChEBI" id="CHEBI:90409"/>
        <note>ligand shared between homodimeric partners</note>
    </ligand>
</feature>
<feature type="binding site" evidence="1">
    <location>
        <position position="10"/>
    </location>
    <ligand>
        <name>5-hydroxymethyl-dUMP</name>
        <dbReference type="ChEBI" id="CHEBI:90409"/>
        <note>ligand shared between homodimeric partners</note>
    </ligand>
</feature>
<feature type="binding site" evidence="1">
    <location>
        <position position="11"/>
    </location>
    <ligand>
        <name>5-hydroxymethyl-dUMP</name>
        <dbReference type="ChEBI" id="CHEBI:90409"/>
        <note>ligand shared between homodimeric partners</note>
    </ligand>
</feature>
<feature type="binding site" evidence="1">
    <location>
        <position position="79"/>
    </location>
    <ligand>
        <name>5-hydroxymethyl-dUMP</name>
        <dbReference type="ChEBI" id="CHEBI:90409"/>
        <note>ligand shared between homodimeric partners</note>
    </ligand>
</feature>
<feature type="binding site" evidence="1">
    <location>
        <position position="81"/>
    </location>
    <ligand>
        <name>5-hydroxymethyl-dUMP</name>
        <dbReference type="ChEBI" id="CHEBI:90409"/>
        <note>ligand shared between homodimeric partners</note>
    </ligand>
</feature>
<feature type="binding site" evidence="1">
    <location>
        <position position="85"/>
    </location>
    <ligand>
        <name>5-hydroxymethyl-dUMP</name>
        <dbReference type="ChEBI" id="CHEBI:90409"/>
        <note>ligand shared between homodimeric partners</note>
    </ligand>
</feature>
<feature type="binding site" description="in other chain" evidence="1">
    <location>
        <position position="109"/>
    </location>
    <ligand>
        <name>5-hydroxymethyl-dUMP</name>
        <dbReference type="ChEBI" id="CHEBI:90409"/>
        <note>ligand shared between homodimeric partners</note>
    </ligand>
</feature>
<proteinExistence type="evidence at transcript level"/>
<accession>C1BW56</accession>